<evidence type="ECO:0000250" key="1">
    <source>
        <dbReference type="UniProtKB" id="Q9ZP19"/>
    </source>
</evidence>
<evidence type="ECO:0000255" key="2"/>
<evidence type="ECO:0000255" key="3">
    <source>
        <dbReference type="PROSITE-ProRule" id="PRU00498"/>
    </source>
</evidence>
<evidence type="ECO:0000269" key="4">
    <source>
    </source>
</evidence>
<evidence type="ECO:0000269" key="5">
    <source>
    </source>
</evidence>
<evidence type="ECO:0000269" key="6">
    <source>
    </source>
</evidence>
<evidence type="ECO:0000303" key="7">
    <source>
    </source>
</evidence>
<evidence type="ECO:0000305" key="8"/>
<evidence type="ECO:0000305" key="9">
    <source>
    </source>
</evidence>
<proteinExistence type="evidence at protein level"/>
<feature type="chain" id="PRO_0000437302" description="Tyrosinase ustQ">
    <location>
        <begin position="1"/>
        <end position="358"/>
    </location>
</feature>
<feature type="transmembrane region" description="Helical" evidence="2">
    <location>
        <begin position="37"/>
        <end position="57"/>
    </location>
</feature>
<feature type="binding site" evidence="1">
    <location>
        <position position="128"/>
    </location>
    <ligand>
        <name>Cu cation</name>
        <dbReference type="ChEBI" id="CHEBI:23378"/>
        <label>A</label>
    </ligand>
</feature>
<feature type="binding site" evidence="1">
    <location>
        <position position="137"/>
    </location>
    <ligand>
        <name>Cu cation</name>
        <dbReference type="ChEBI" id="CHEBI:23378"/>
        <label>A</label>
    </ligand>
</feature>
<feature type="binding site" evidence="1">
    <location>
        <position position="266"/>
    </location>
    <ligand>
        <name>Cu cation</name>
        <dbReference type="ChEBI" id="CHEBI:23378"/>
        <label>B</label>
    </ligand>
</feature>
<feature type="binding site" evidence="1">
    <location>
        <position position="270"/>
    </location>
    <ligand>
        <name>Cu cation</name>
        <dbReference type="ChEBI" id="CHEBI:23378"/>
        <label>B</label>
    </ligand>
</feature>
<feature type="binding site" evidence="1">
    <location>
        <position position="292"/>
    </location>
    <ligand>
        <name>Cu cation</name>
        <dbReference type="ChEBI" id="CHEBI:23378"/>
        <label>B</label>
    </ligand>
</feature>
<feature type="glycosylation site" description="N-linked (GlcNAc...) asparagine" evidence="3">
    <location>
        <position position="28"/>
    </location>
</feature>
<feature type="glycosylation site" description="N-linked (GlcNAc...) asparagine" evidence="3">
    <location>
        <position position="91"/>
    </location>
</feature>
<feature type="glycosylation site" description="N-linked (GlcNAc...) asparagine" evidence="3">
    <location>
        <position position="109"/>
    </location>
</feature>
<feature type="glycosylation site" description="N-linked (GlcNAc...) asparagine" evidence="3">
    <location>
        <position position="172"/>
    </location>
</feature>
<feature type="glycosylation site" description="N-linked (GlcNAc...) asparagine" evidence="3">
    <location>
        <position position="214"/>
    </location>
</feature>
<feature type="glycosylation site" description="N-linked (GlcNAc...) asparagine" evidence="3">
    <location>
        <position position="321"/>
    </location>
</feature>
<feature type="glycosylation site" description="N-linked (GlcNAc...) asparagine" evidence="3">
    <location>
        <position position="325"/>
    </location>
</feature>
<reference key="1">
    <citation type="journal article" date="2015" name="Genome Announc.">
        <title>Genome sequence of Aspergillus flavus NRRL 3357, a strain that causes aflatoxin contamination of food and feed.</title>
        <authorList>
            <person name="Nierman W.C."/>
            <person name="Yu J."/>
            <person name="Fedorova-Abrams N.D."/>
            <person name="Losada L."/>
            <person name="Cleveland T.E."/>
            <person name="Bhatnagar D."/>
            <person name="Bennett J.W."/>
            <person name="Dean R."/>
            <person name="Payne G.A."/>
        </authorList>
    </citation>
    <scope>NUCLEOTIDE SEQUENCE [LARGE SCALE GENOMIC DNA]</scope>
    <source>
        <strain>ATCC 200026 / FGSC A1120 / IAM 13836 / NRRL 3357 / JCM 12722 / SRRC 167</strain>
    </source>
</reference>
<reference key="2">
    <citation type="journal article" date="2014" name="Fungal Genet. Biol.">
        <title>Characterization of the biosynthetic gene cluster for the ribosomally synthesized cyclic peptide ustiloxin B in Aspergillus flavus.</title>
        <authorList>
            <person name="Umemura M."/>
            <person name="Nagano N."/>
            <person name="Koike H."/>
            <person name="Kawano J."/>
            <person name="Ishii T."/>
            <person name="Miyamura Y."/>
            <person name="Kikuchi M."/>
            <person name="Tamano K."/>
            <person name="Yu J."/>
            <person name="Shin-ya K."/>
            <person name="Machida M."/>
        </authorList>
    </citation>
    <scope>FUNCTION</scope>
    <scope>DISRUPTION PHENOTYPE</scope>
    <scope>CATALYTIC ACTIVITY</scope>
</reference>
<reference key="3">
    <citation type="journal article" date="2016" name="Angew. Chem. Int. Ed.">
        <title>Unveiling the biosynthetic pathway of the ribosomally synthesized and post-translationally modified peptide ustiloxin B in filamentous fungi.</title>
        <authorList>
            <person name="Ye Y."/>
            <person name="Minami A."/>
            <person name="Igarashi Y."/>
            <person name="Izumikawa M."/>
            <person name="Umemura M."/>
            <person name="Nagano N."/>
            <person name="Machida M."/>
            <person name="Kawahara T."/>
            <person name="Shin-Ya K."/>
            <person name="Gomi K."/>
            <person name="Oikawa H."/>
        </authorList>
    </citation>
    <scope>FUNCTION</scope>
</reference>
<reference key="4">
    <citation type="journal article" date="2016" name="Fungal Genet. Biol.">
        <title>Class of cyclic ribosomal peptide synthetic genes in filamentous fungi.</title>
        <authorList>
            <person name="Nagano N."/>
            <person name="Umemura M."/>
            <person name="Izumikawa M."/>
            <person name="Kawano J."/>
            <person name="Ishii T."/>
            <person name="Kikuchi M."/>
            <person name="Tomii K."/>
            <person name="Kumagai T."/>
            <person name="Yoshimi A."/>
            <person name="Machida M."/>
            <person name="Abe K."/>
            <person name="Shin-ya K."/>
            <person name="Asai K."/>
        </authorList>
    </citation>
    <scope>FUNCTION</scope>
    <scope>DISRUPTION PHENOTYPE</scope>
</reference>
<dbReference type="EC" id="1.14.18.1" evidence="9"/>
<dbReference type="EMBL" id="EQ963480">
    <property type="protein sequence ID" value="EED49425.1"/>
    <property type="molecule type" value="Genomic_DNA"/>
</dbReference>
<dbReference type="RefSeq" id="XP_002381326.1">
    <property type="nucleotide sequence ID" value="XM_002381285.1"/>
</dbReference>
<dbReference type="SMR" id="B8NM74"/>
<dbReference type="STRING" id="332952.B8NM74"/>
<dbReference type="GlyCosmos" id="B8NM74">
    <property type="glycosylation" value="7 sites, No reported glycans"/>
</dbReference>
<dbReference type="EnsemblFungi" id="EED49425">
    <property type="protein sequence ID" value="EED49425"/>
    <property type="gene ID" value="AFLA_095060"/>
</dbReference>
<dbReference type="VEuPathDB" id="FungiDB:AFLA_009744"/>
<dbReference type="eggNOG" id="ENOG502RM4B">
    <property type="taxonomic scope" value="Eukaryota"/>
</dbReference>
<dbReference type="HOGENOM" id="CLU_035914_1_2_1"/>
<dbReference type="OMA" id="HIATRRE"/>
<dbReference type="GO" id="GO:0016020">
    <property type="term" value="C:membrane"/>
    <property type="evidence" value="ECO:0007669"/>
    <property type="project" value="UniProtKB-SubCell"/>
</dbReference>
<dbReference type="GO" id="GO:0046872">
    <property type="term" value="F:metal ion binding"/>
    <property type="evidence" value="ECO:0007669"/>
    <property type="project" value="UniProtKB-KW"/>
</dbReference>
<dbReference type="GO" id="GO:0004503">
    <property type="term" value="F:tyrosinase activity"/>
    <property type="evidence" value="ECO:0007669"/>
    <property type="project" value="UniProtKB-EC"/>
</dbReference>
<dbReference type="Gene3D" id="1.10.1280.10">
    <property type="entry name" value="Di-copper center containing domain from catechol oxidase"/>
    <property type="match status" value="1"/>
</dbReference>
<dbReference type="InterPro" id="IPR008922">
    <property type="entry name" value="Di-copper_centre_dom_sf"/>
</dbReference>
<dbReference type="InterPro" id="IPR050316">
    <property type="entry name" value="Tyrosinase/Hemocyanin"/>
</dbReference>
<dbReference type="InterPro" id="IPR002227">
    <property type="entry name" value="Tyrosinase_Cu-bd"/>
</dbReference>
<dbReference type="PANTHER" id="PTHR11474:SF127">
    <property type="entry name" value="TYROSINASE COPPER-BINDING DOMAIN-CONTAINING PROTEIN"/>
    <property type="match status" value="1"/>
</dbReference>
<dbReference type="PANTHER" id="PTHR11474">
    <property type="entry name" value="TYROSINASE FAMILY MEMBER"/>
    <property type="match status" value="1"/>
</dbReference>
<dbReference type="Pfam" id="PF00264">
    <property type="entry name" value="Tyrosinase"/>
    <property type="match status" value="1"/>
</dbReference>
<dbReference type="PRINTS" id="PR00092">
    <property type="entry name" value="TYROSINASE"/>
</dbReference>
<dbReference type="SUPFAM" id="SSF48056">
    <property type="entry name" value="Di-copper centre-containing domain"/>
    <property type="match status" value="1"/>
</dbReference>
<dbReference type="PROSITE" id="PS00497">
    <property type="entry name" value="TYROSINASE_1"/>
    <property type="match status" value="1"/>
</dbReference>
<dbReference type="PROSITE" id="PS00498">
    <property type="entry name" value="TYROSINASE_2"/>
    <property type="match status" value="1"/>
</dbReference>
<comment type="function">
    <text evidence="4 5 6">Tyrosinase; part of the gene cluster that mediates the biosynthesis of the secondary metabolite ustiloxin B, an antimitotic tetrapeptide (PubMed:24841822, PubMed:26703898, PubMed:27166860). First, ustA is processed by the subtilisin-like endoprotease Kex2 that is outside the ustiloxin B gene cluster, at the C-terminal side of Arg-Lys, after transfer to Golgi apparatus through the endoplasmic reticulum (ER) (PubMed:24841822). Cleavage by KEX2 generates 16 peptides YAIG-I to YAIG-XVI (PubMed:24841822). To process the precursor peptide further, at least two peptidases are necessary to cleave the N-terminal and C-terminal sides of the Tyr-Ala-Ile-Gly core peptide which serves as backbone for the synthesis of ustiloxin B, through cyclization and modification of the tyrosine with a non-protein coding amino acid, norvaline (PubMed:24841822). One of the two peptidases must be the serine peptidase ustP; and the other pepdidase is probably ustH (PubMed:24841822). Macrocyclization of the core peptide derived from ustA requires the tyrosinase ustQ, as well as the homologous oxidases ustYa and ustYb, and leads to the production of the first cyclization product N-desmethylustiloxin F (PubMed:26703898, PubMed:27166860). For the formation of N-desmethylustiloxin F, three oxidation steps are required, hydroxylation at the benzylic position, hydroxylation at either the aromatic ring of Tyr or beta-position of Ile, and oxidative cyclization (PubMed:27166860). UstQ may catalyze the oxidation of a phenol moiety, whereas the ustYa and ustYb are most likely responsible for the remaining two-step oxidations (PubMed:27166860). N-desmethylustiloxin F is then methylated by ustM to yield ustiloxin F which in turn substrate of the cytochrome P450 monooxygenase ustC which catalyzes the formation of S-deoxyustiloxin H (PubMed:27166860). The flavoprotein monooxygenases ustF1 and ustF2 then participate in the modification of the side chain of S-deoxyustiloxin H, leading to the synthesis of an oxime intermediate, via ustiloxin H (PubMed:27166860). Finally, carboxylative dehydration performed by the cysteine desulfurase-like protein ustD yields ustiloxin B (PubMed:27166860).</text>
</comment>
<comment type="catalytic activity">
    <reaction evidence="1">
        <text>2 L-dopa + O2 = 2 L-dopaquinone + 2 H2O</text>
        <dbReference type="Rhea" id="RHEA:34287"/>
        <dbReference type="ChEBI" id="CHEBI:15377"/>
        <dbReference type="ChEBI" id="CHEBI:15379"/>
        <dbReference type="ChEBI" id="CHEBI:57504"/>
        <dbReference type="ChEBI" id="CHEBI:57924"/>
        <dbReference type="EC" id="1.14.18.1"/>
    </reaction>
</comment>
<comment type="catalytic activity">
    <reaction evidence="1">
        <text>L-tyrosine + O2 = L-dopaquinone + H2O</text>
        <dbReference type="Rhea" id="RHEA:18117"/>
        <dbReference type="ChEBI" id="CHEBI:15377"/>
        <dbReference type="ChEBI" id="CHEBI:15379"/>
        <dbReference type="ChEBI" id="CHEBI:57924"/>
        <dbReference type="ChEBI" id="CHEBI:58315"/>
        <dbReference type="EC" id="1.14.18.1"/>
    </reaction>
</comment>
<comment type="cofactor">
    <cofactor evidence="1">
        <name>Cu(2+)</name>
        <dbReference type="ChEBI" id="CHEBI:29036"/>
    </cofactor>
    <text evidence="1">Binds 2 copper ions per subunit.</text>
</comment>
<comment type="pathway">
    <text evidence="4">Mycotoxin biosynthesis.</text>
</comment>
<comment type="subcellular location">
    <subcellularLocation>
        <location evidence="2">Membrane</location>
        <topology evidence="2">Single-pass membrane protein</topology>
    </subcellularLocation>
</comment>
<comment type="disruption phenotype">
    <text evidence="4 5">Decreases the production of ustiloxin B (PubMed:24841822, PubMed:26703898).</text>
</comment>
<comment type="similarity">
    <text evidence="8">Belongs to the tyrosinase family.</text>
</comment>
<accession>B8NM74</accession>
<organism>
    <name type="scientific">Aspergillus flavus (strain ATCC 200026 / FGSC A1120 / IAM 13836 / NRRL 3357 / JCM 12722 / SRRC 167)</name>
    <dbReference type="NCBI Taxonomy" id="332952"/>
    <lineage>
        <taxon>Eukaryota</taxon>
        <taxon>Fungi</taxon>
        <taxon>Dikarya</taxon>
        <taxon>Ascomycota</taxon>
        <taxon>Pezizomycotina</taxon>
        <taxon>Eurotiomycetes</taxon>
        <taxon>Eurotiomycetidae</taxon>
        <taxon>Eurotiales</taxon>
        <taxon>Aspergillaceae</taxon>
        <taxon>Aspergillus</taxon>
        <taxon>Aspergillus subgen. Circumdati</taxon>
    </lineage>
</organism>
<name>USTQ_ASPFN</name>
<gene>
    <name evidence="7" type="primary">ustQ</name>
    <name type="ORF">AFLA_095060</name>
</gene>
<sequence length="358" mass="40248">MAVEYFQEKLNKWRYSPVAGSPDEEGGNATVKPKASFVPVYAGLTIISLITVTVSLVHLLSGTGTTTTFPPCKNPAVRREWRSLTSSEKQNFTQAVICLASIPSTWQPNGTIYDDFAILHGGIGSWCHRSASFLPWHRYTLVVFEKALREHCGFTGQVPYWDWTLDWMNLANSSIFNSVDGFGGDGDRTGQEVVGGGRCVIDGPFAGLQPILYNHTYVRHCIARGFRDGDQAGRISGEYYRPESIGGILRKQSYVELVREVEIYLHNPLHQGVNGDFLAMTAANDPLFYVHHAQLDRLWWRWQQESPDLRLKEYHGKHMYNSTGNATLDDILMYGGFAEDIPVSRVMDTKGGFLCYTY</sequence>
<keyword id="KW-0186">Copper</keyword>
<keyword id="KW-0325">Glycoprotein</keyword>
<keyword id="KW-0472">Membrane</keyword>
<keyword id="KW-0479">Metal-binding</keyword>
<keyword id="KW-0503">Monooxygenase</keyword>
<keyword id="KW-0560">Oxidoreductase</keyword>
<keyword id="KW-0812">Transmembrane</keyword>
<keyword id="KW-1133">Transmembrane helix</keyword>
<protein>
    <recommendedName>
        <fullName evidence="7">Tyrosinase ustQ</fullName>
        <ecNumber evidence="9">1.14.18.1</ecNumber>
    </recommendedName>
    <alternativeName>
        <fullName evidence="7">Ustiloxin B biosynthesis protein Q</fullName>
    </alternativeName>
</protein>